<protein>
    <recommendedName>
        <fullName evidence="1">Probable manganese-dependent inorganic pyrophosphatase</fullName>
        <ecNumber evidence="1">3.6.1.1</ecNumber>
    </recommendedName>
    <alternativeName>
        <fullName evidence="1">Pyrophosphate phospho-hydrolase</fullName>
        <shortName evidence="1">PPase</shortName>
    </alternativeName>
</protein>
<organism>
    <name type="scientific">Streptococcus thermophilus (strain CNRZ 1066)</name>
    <dbReference type="NCBI Taxonomy" id="299768"/>
    <lineage>
        <taxon>Bacteria</taxon>
        <taxon>Bacillati</taxon>
        <taxon>Bacillota</taxon>
        <taxon>Bacilli</taxon>
        <taxon>Lactobacillales</taxon>
        <taxon>Streptococcaceae</taxon>
        <taxon>Streptococcus</taxon>
    </lineage>
</organism>
<evidence type="ECO:0000255" key="1">
    <source>
        <dbReference type="HAMAP-Rule" id="MF_00207"/>
    </source>
</evidence>
<accession>Q5M194</accession>
<comment type="catalytic activity">
    <reaction evidence="1">
        <text>diphosphate + H2O = 2 phosphate + H(+)</text>
        <dbReference type="Rhea" id="RHEA:24576"/>
        <dbReference type="ChEBI" id="CHEBI:15377"/>
        <dbReference type="ChEBI" id="CHEBI:15378"/>
        <dbReference type="ChEBI" id="CHEBI:33019"/>
        <dbReference type="ChEBI" id="CHEBI:43474"/>
        <dbReference type="EC" id="3.6.1.1"/>
    </reaction>
</comment>
<comment type="cofactor">
    <cofactor evidence="1">
        <name>Mn(2+)</name>
        <dbReference type="ChEBI" id="CHEBI:29035"/>
    </cofactor>
    <text evidence="1">Binds 2 manganese ions per subunit.</text>
</comment>
<comment type="subcellular location">
    <subcellularLocation>
        <location evidence="1">Cytoplasm</location>
    </subcellularLocation>
</comment>
<comment type="similarity">
    <text evidence="1">Belongs to the PPase class C family.</text>
</comment>
<name>PPAC_STRT1</name>
<keyword id="KW-0963">Cytoplasm</keyword>
<keyword id="KW-0378">Hydrolase</keyword>
<keyword id="KW-0464">Manganese</keyword>
<keyword id="KW-0479">Metal-binding</keyword>
<sequence>MSKIFVFGHQNPDSDAIGSSYGYAYLKRQLGVEAEAVALGTPNEETAFVLDYFSVNAPRVVESAQSEGVNQVILTDHNEFQQSISDIKDVEVIEVVDHHRVANFETANPLMMRLEPVGSASSIVYRMFKENNVEIPKDVAGLLLSGLISDTLLLKSPTTHASDPAVAEELARLAGVNLEEYGLAMLKAGTNLSSKSAEELIDIDAKTFELNGNQVRVAQVNTVDISDVLSRQAEIEEAINSSIKSNGYSDFVLMITDILNSNSEILALGSNTDKIEKAFNFVLENNHAFLKGAVSRKKQVVPQLTESFNV</sequence>
<dbReference type="EC" id="3.6.1.1" evidence="1"/>
<dbReference type="EMBL" id="CP000024">
    <property type="protein sequence ID" value="AAV61975.1"/>
    <property type="molecule type" value="Genomic_DNA"/>
</dbReference>
<dbReference type="RefSeq" id="WP_011225519.1">
    <property type="nucleotide sequence ID" value="NC_006449.1"/>
</dbReference>
<dbReference type="SMR" id="Q5M194"/>
<dbReference type="KEGG" id="stc:str0372"/>
<dbReference type="HOGENOM" id="CLU_025243_0_1_9"/>
<dbReference type="GO" id="GO:0005737">
    <property type="term" value="C:cytoplasm"/>
    <property type="evidence" value="ECO:0007669"/>
    <property type="project" value="UniProtKB-SubCell"/>
</dbReference>
<dbReference type="GO" id="GO:0004427">
    <property type="term" value="F:inorganic diphosphate phosphatase activity"/>
    <property type="evidence" value="ECO:0007669"/>
    <property type="project" value="UniProtKB-UniRule"/>
</dbReference>
<dbReference type="GO" id="GO:0030145">
    <property type="term" value="F:manganese ion binding"/>
    <property type="evidence" value="ECO:0007669"/>
    <property type="project" value="UniProtKB-UniRule"/>
</dbReference>
<dbReference type="FunFam" id="3.10.310.20:FF:000001">
    <property type="entry name" value="Probable manganese-dependent inorganic pyrophosphatase"/>
    <property type="match status" value="1"/>
</dbReference>
<dbReference type="FunFam" id="3.90.1640.10:FF:000001">
    <property type="entry name" value="Probable manganese-dependent inorganic pyrophosphatase"/>
    <property type="match status" value="1"/>
</dbReference>
<dbReference type="Gene3D" id="3.10.310.20">
    <property type="entry name" value="DHHA2 domain"/>
    <property type="match status" value="1"/>
</dbReference>
<dbReference type="Gene3D" id="3.90.1640.10">
    <property type="entry name" value="inorganic pyrophosphatase (n-terminal core)"/>
    <property type="match status" value="1"/>
</dbReference>
<dbReference type="HAMAP" id="MF_00207">
    <property type="entry name" value="PPase_C"/>
    <property type="match status" value="1"/>
</dbReference>
<dbReference type="InterPro" id="IPR001667">
    <property type="entry name" value="DDH_dom"/>
</dbReference>
<dbReference type="InterPro" id="IPR038763">
    <property type="entry name" value="DHH_sf"/>
</dbReference>
<dbReference type="InterPro" id="IPR004097">
    <property type="entry name" value="DHHA2"/>
</dbReference>
<dbReference type="InterPro" id="IPR038222">
    <property type="entry name" value="DHHA2_dom_sf"/>
</dbReference>
<dbReference type="InterPro" id="IPR022934">
    <property type="entry name" value="Mn-dep_inorganic_PyrPase"/>
</dbReference>
<dbReference type="InterPro" id="IPR051319">
    <property type="entry name" value="Oligoribo/pAp-PDE_c-di-AMP_PDE"/>
</dbReference>
<dbReference type="NCBIfam" id="NF003877">
    <property type="entry name" value="PRK05427.1"/>
    <property type="match status" value="1"/>
</dbReference>
<dbReference type="PANTHER" id="PTHR47618">
    <property type="entry name" value="BIFUNCTIONAL OLIGORIBONUCLEASE AND PAP PHOSPHATASE NRNA"/>
    <property type="match status" value="1"/>
</dbReference>
<dbReference type="PANTHER" id="PTHR47618:SF1">
    <property type="entry name" value="BIFUNCTIONAL OLIGORIBONUCLEASE AND PAP PHOSPHATASE NRNA"/>
    <property type="match status" value="1"/>
</dbReference>
<dbReference type="Pfam" id="PF01368">
    <property type="entry name" value="DHH"/>
    <property type="match status" value="1"/>
</dbReference>
<dbReference type="Pfam" id="PF02833">
    <property type="entry name" value="DHHA2"/>
    <property type="match status" value="1"/>
</dbReference>
<dbReference type="SMART" id="SM01131">
    <property type="entry name" value="DHHA2"/>
    <property type="match status" value="1"/>
</dbReference>
<dbReference type="SUPFAM" id="SSF64182">
    <property type="entry name" value="DHH phosphoesterases"/>
    <property type="match status" value="1"/>
</dbReference>
<feature type="chain" id="PRO_1000012330" description="Probable manganese-dependent inorganic pyrophosphatase">
    <location>
        <begin position="1"/>
        <end position="310"/>
    </location>
</feature>
<feature type="binding site" evidence="1">
    <location>
        <position position="9"/>
    </location>
    <ligand>
        <name>Mn(2+)</name>
        <dbReference type="ChEBI" id="CHEBI:29035"/>
        <label>1</label>
    </ligand>
</feature>
<feature type="binding site" evidence="1">
    <location>
        <position position="13"/>
    </location>
    <ligand>
        <name>Mn(2+)</name>
        <dbReference type="ChEBI" id="CHEBI:29035"/>
        <label>1</label>
    </ligand>
</feature>
<feature type="binding site" evidence="1">
    <location>
        <position position="15"/>
    </location>
    <ligand>
        <name>Mn(2+)</name>
        <dbReference type="ChEBI" id="CHEBI:29035"/>
        <label>2</label>
    </ligand>
</feature>
<feature type="binding site" evidence="1">
    <location>
        <position position="76"/>
    </location>
    <ligand>
        <name>Mn(2+)</name>
        <dbReference type="ChEBI" id="CHEBI:29035"/>
        <label>1</label>
    </ligand>
</feature>
<feature type="binding site" evidence="1">
    <location>
        <position position="76"/>
    </location>
    <ligand>
        <name>Mn(2+)</name>
        <dbReference type="ChEBI" id="CHEBI:29035"/>
        <label>2</label>
    </ligand>
</feature>
<feature type="binding site" evidence="1">
    <location>
        <position position="98"/>
    </location>
    <ligand>
        <name>Mn(2+)</name>
        <dbReference type="ChEBI" id="CHEBI:29035"/>
        <label>2</label>
    </ligand>
</feature>
<feature type="binding site" evidence="1">
    <location>
        <position position="150"/>
    </location>
    <ligand>
        <name>Mn(2+)</name>
        <dbReference type="ChEBI" id="CHEBI:29035"/>
        <label>2</label>
    </ligand>
</feature>
<reference key="1">
    <citation type="journal article" date="2004" name="Nat. Biotechnol.">
        <title>Complete sequence and comparative genome analysis of the dairy bacterium Streptococcus thermophilus.</title>
        <authorList>
            <person name="Bolotin A."/>
            <person name="Quinquis B."/>
            <person name="Renault P."/>
            <person name="Sorokin A."/>
            <person name="Ehrlich S.D."/>
            <person name="Kulakauskas S."/>
            <person name="Lapidus A."/>
            <person name="Goltsman E."/>
            <person name="Mazur M."/>
            <person name="Pusch G.D."/>
            <person name="Fonstein M."/>
            <person name="Overbeek R."/>
            <person name="Kyprides N."/>
            <person name="Purnelle B."/>
            <person name="Prozzi D."/>
            <person name="Ngui K."/>
            <person name="Masuy D."/>
            <person name="Hancy F."/>
            <person name="Burteau S."/>
            <person name="Boutry M."/>
            <person name="Delcour J."/>
            <person name="Goffeau A."/>
            <person name="Hols P."/>
        </authorList>
    </citation>
    <scope>NUCLEOTIDE SEQUENCE [LARGE SCALE GENOMIC DNA]</scope>
    <source>
        <strain>CNRZ 1066</strain>
    </source>
</reference>
<proteinExistence type="inferred from homology"/>
<gene>
    <name evidence="1" type="primary">ppaC</name>
    <name type="ordered locus">str0372</name>
</gene>